<gene>
    <name evidence="1" type="primary">HCR1</name>
    <name type="ordered locus">DEHA2G04444g</name>
</gene>
<reference key="1">
    <citation type="journal article" date="2004" name="Nature">
        <title>Genome evolution in yeasts.</title>
        <authorList>
            <person name="Dujon B."/>
            <person name="Sherman D."/>
            <person name="Fischer G."/>
            <person name="Durrens P."/>
            <person name="Casaregola S."/>
            <person name="Lafontaine I."/>
            <person name="de Montigny J."/>
            <person name="Marck C."/>
            <person name="Neuveglise C."/>
            <person name="Talla E."/>
            <person name="Goffard N."/>
            <person name="Frangeul L."/>
            <person name="Aigle M."/>
            <person name="Anthouard V."/>
            <person name="Babour A."/>
            <person name="Barbe V."/>
            <person name="Barnay S."/>
            <person name="Blanchin S."/>
            <person name="Beckerich J.-M."/>
            <person name="Beyne E."/>
            <person name="Bleykasten C."/>
            <person name="Boisrame A."/>
            <person name="Boyer J."/>
            <person name="Cattolico L."/>
            <person name="Confanioleri F."/>
            <person name="de Daruvar A."/>
            <person name="Despons L."/>
            <person name="Fabre E."/>
            <person name="Fairhead C."/>
            <person name="Ferry-Dumazet H."/>
            <person name="Groppi A."/>
            <person name="Hantraye F."/>
            <person name="Hennequin C."/>
            <person name="Jauniaux N."/>
            <person name="Joyet P."/>
            <person name="Kachouri R."/>
            <person name="Kerrest A."/>
            <person name="Koszul R."/>
            <person name="Lemaire M."/>
            <person name="Lesur I."/>
            <person name="Ma L."/>
            <person name="Muller H."/>
            <person name="Nicaud J.-M."/>
            <person name="Nikolski M."/>
            <person name="Oztas S."/>
            <person name="Ozier-Kalogeropoulos O."/>
            <person name="Pellenz S."/>
            <person name="Potier S."/>
            <person name="Richard G.-F."/>
            <person name="Straub M.-L."/>
            <person name="Suleau A."/>
            <person name="Swennen D."/>
            <person name="Tekaia F."/>
            <person name="Wesolowski-Louvel M."/>
            <person name="Westhof E."/>
            <person name="Wirth B."/>
            <person name="Zeniou-Meyer M."/>
            <person name="Zivanovic Y."/>
            <person name="Bolotin-Fukuhara M."/>
            <person name="Thierry A."/>
            <person name="Bouchier C."/>
            <person name="Caudron B."/>
            <person name="Scarpelli C."/>
            <person name="Gaillardin C."/>
            <person name="Weissenbach J."/>
            <person name="Wincker P."/>
            <person name="Souciet J.-L."/>
        </authorList>
    </citation>
    <scope>NUCLEOTIDE SEQUENCE [LARGE SCALE GENOMIC DNA]</scope>
    <source>
        <strain>ATCC 36239 / CBS 767 / BCRC 21394 / JCM 1990 / NBRC 0083 / IGC 2968</strain>
    </source>
</reference>
<feature type="chain" id="PRO_0000365153" description="Eukaryotic translation initiation factor 3 subunit J">
    <location>
        <begin position="1"/>
        <end position="286"/>
    </location>
</feature>
<feature type="region of interest" description="Disordered" evidence="2">
    <location>
        <begin position="1"/>
        <end position="35"/>
    </location>
</feature>
<feature type="region of interest" description="Disordered" evidence="2">
    <location>
        <begin position="141"/>
        <end position="162"/>
    </location>
</feature>
<feature type="region of interest" description="Disordered" evidence="2">
    <location>
        <begin position="229"/>
        <end position="258"/>
    </location>
</feature>
<feature type="coiled-coil region" evidence="1">
    <location>
        <begin position="35"/>
        <end position="75"/>
    </location>
</feature>
<feature type="compositionally biased region" description="Acidic residues" evidence="2">
    <location>
        <begin position="21"/>
        <end position="35"/>
    </location>
</feature>
<name>EIF3J_DEBHA</name>
<comment type="function">
    <text evidence="1">Component of the eukaryotic translation initiation factor 3 (eIF-3) complex, which is involved in protein synthesis of a specialized repertoire of mRNAs and, together with other initiation factors, stimulates binding of mRNA and methionyl-tRNAi to the 40S ribosome. The eIF-3 complex specifically targets and initiates translation of a subset of mRNAs involved in cell proliferation.</text>
</comment>
<comment type="subunit">
    <text evidence="1">Component of the eukaryotic translation initiation factor 3 (eIF-3) complex.</text>
</comment>
<comment type="subcellular location">
    <subcellularLocation>
        <location evidence="1">Cytoplasm</location>
    </subcellularLocation>
</comment>
<comment type="similarity">
    <text evidence="1">Belongs to the eIF-3 subunit J family.</text>
</comment>
<proteinExistence type="inferred from homology"/>
<keyword id="KW-0175">Coiled coil</keyword>
<keyword id="KW-0963">Cytoplasm</keyword>
<keyword id="KW-0396">Initiation factor</keyword>
<keyword id="KW-0648">Protein biosynthesis</keyword>
<keyword id="KW-1185">Reference proteome</keyword>
<organism>
    <name type="scientific">Debaryomyces hansenii (strain ATCC 36239 / CBS 767 / BCRC 21394 / JCM 1990 / NBRC 0083 / IGC 2968)</name>
    <name type="common">Yeast</name>
    <name type="synonym">Torulaspora hansenii</name>
    <dbReference type="NCBI Taxonomy" id="284592"/>
    <lineage>
        <taxon>Eukaryota</taxon>
        <taxon>Fungi</taxon>
        <taxon>Dikarya</taxon>
        <taxon>Ascomycota</taxon>
        <taxon>Saccharomycotina</taxon>
        <taxon>Pichiomycetes</taxon>
        <taxon>Debaryomycetaceae</taxon>
        <taxon>Debaryomyces</taxon>
    </lineage>
</organism>
<accession>Q6BJ82</accession>
<protein>
    <recommendedName>
        <fullName evidence="1">Eukaryotic translation initiation factor 3 subunit J</fullName>
        <shortName evidence="1">eIF3j</shortName>
    </recommendedName>
    <alternativeName>
        <fullName>Eukaryotic translation initiation factor 3 30 kDa subunit</fullName>
        <shortName>eIF-3 30 kDa</shortName>
    </alternativeName>
</protein>
<dbReference type="EMBL" id="CR382139">
    <property type="protein sequence ID" value="CAG90194.2"/>
    <property type="molecule type" value="Genomic_DNA"/>
</dbReference>
<dbReference type="RefSeq" id="XP_461739.2">
    <property type="nucleotide sequence ID" value="XM_461739.1"/>
</dbReference>
<dbReference type="SMR" id="Q6BJ82"/>
<dbReference type="FunCoup" id="Q6BJ82">
    <property type="interactions" value="122"/>
</dbReference>
<dbReference type="STRING" id="284592.Q6BJ82"/>
<dbReference type="GeneID" id="2904614"/>
<dbReference type="KEGG" id="dha:DEHA2G04444g"/>
<dbReference type="VEuPathDB" id="FungiDB:DEHA2G04444g"/>
<dbReference type="eggNOG" id="KOG4813">
    <property type="taxonomic scope" value="Eukaryota"/>
</dbReference>
<dbReference type="HOGENOM" id="CLU_085412_0_0_1"/>
<dbReference type="InParanoid" id="Q6BJ82"/>
<dbReference type="OMA" id="MESWDAE"/>
<dbReference type="OrthoDB" id="20381at2759"/>
<dbReference type="Proteomes" id="UP000000599">
    <property type="component" value="Chromosome G"/>
</dbReference>
<dbReference type="GO" id="GO:0016282">
    <property type="term" value="C:eukaryotic 43S preinitiation complex"/>
    <property type="evidence" value="ECO:0007669"/>
    <property type="project" value="UniProtKB-UniRule"/>
</dbReference>
<dbReference type="GO" id="GO:0033290">
    <property type="term" value="C:eukaryotic 48S preinitiation complex"/>
    <property type="evidence" value="ECO:0007669"/>
    <property type="project" value="UniProtKB-UniRule"/>
</dbReference>
<dbReference type="GO" id="GO:0005852">
    <property type="term" value="C:eukaryotic translation initiation factor 3 complex"/>
    <property type="evidence" value="ECO:0007669"/>
    <property type="project" value="UniProtKB-UniRule"/>
</dbReference>
<dbReference type="GO" id="GO:0003743">
    <property type="term" value="F:translation initiation factor activity"/>
    <property type="evidence" value="ECO:0007669"/>
    <property type="project" value="UniProtKB-UniRule"/>
</dbReference>
<dbReference type="GO" id="GO:0001732">
    <property type="term" value="P:formation of cytoplasmic translation initiation complex"/>
    <property type="evidence" value="ECO:0007669"/>
    <property type="project" value="UniProtKB-UniRule"/>
</dbReference>
<dbReference type="GO" id="GO:0000462">
    <property type="term" value="P:maturation of SSU-rRNA from tricistronic rRNA transcript (SSU-rRNA, 5.8S rRNA, LSU-rRNA)"/>
    <property type="evidence" value="ECO:0007669"/>
    <property type="project" value="EnsemblFungi"/>
</dbReference>
<dbReference type="GO" id="GO:0000184">
    <property type="term" value="P:nuclear-transcribed mRNA catabolic process, nonsense-mediated decay"/>
    <property type="evidence" value="ECO:0007669"/>
    <property type="project" value="EnsemblFungi"/>
</dbReference>
<dbReference type="Gene3D" id="1.10.246.60">
    <property type="entry name" value="Eukaryotic translation initiation factor 3 like domains"/>
    <property type="match status" value="1"/>
</dbReference>
<dbReference type="HAMAP" id="MF_03009">
    <property type="entry name" value="eIF3j"/>
    <property type="match status" value="1"/>
</dbReference>
<dbReference type="InterPro" id="IPR023194">
    <property type="entry name" value="eIF3-like_dom_sf"/>
</dbReference>
<dbReference type="InterPro" id="IPR013906">
    <property type="entry name" value="eIF3j"/>
</dbReference>
<dbReference type="PANTHER" id="PTHR21681">
    <property type="entry name" value="EUKARYOTIC TRANSLATION INITIATION FACTOR 3 SUBUNIT J"/>
    <property type="match status" value="1"/>
</dbReference>
<dbReference type="PANTHER" id="PTHR21681:SF0">
    <property type="entry name" value="EUKARYOTIC TRANSLATION INITIATION FACTOR 3 SUBUNIT J"/>
    <property type="match status" value="1"/>
</dbReference>
<dbReference type="Pfam" id="PF08597">
    <property type="entry name" value="eIF3_subunit"/>
    <property type="match status" value="1"/>
</dbReference>
<sequence length="286" mass="31557">MSWDDEDFDIPSNSKQAAASWEEEGNDEPLLDSWDIDEEEVARKKKEEEAKKKAEKEALKKKQEESKAKKLSKNKGQRALLDIDLVDENTRQELLKKAELDADLNNAADLFGGLGVAGEGGMDINEHPRERAAKAAAAAAAASGPTPARLTKDTPIDTHPLFQPTDRQEYEKLRKALAPVLTNLAEDSLMNYSSGLAIDLIRDLAQPLSIESIRKVVSTLNVISKEKEKAERQARLKKAGGTATGGAGKKKAKPAVKTNVNTSFKQDVFDDIDQSKYDEFEEDDFM</sequence>
<evidence type="ECO:0000255" key="1">
    <source>
        <dbReference type="HAMAP-Rule" id="MF_03009"/>
    </source>
</evidence>
<evidence type="ECO:0000256" key="2">
    <source>
        <dbReference type="SAM" id="MobiDB-lite"/>
    </source>
</evidence>